<gene>
    <name type="ordered locus">Ping_1076</name>
</gene>
<sequence length="98" mass="11285">MLCAVYKSIRKSQTYLFIAKRDDFSSVPEPLLAQFGPPQLVSLLNITLQTKFAMAEAEKVLSAVKNNGYYLQLPPPPVNHLQEHKDWKKKRQENKNEI</sequence>
<organism>
    <name type="scientific">Psychromonas ingrahamii (strain DSM 17664 / CCUG 51855 / 37)</name>
    <dbReference type="NCBI Taxonomy" id="357804"/>
    <lineage>
        <taxon>Bacteria</taxon>
        <taxon>Pseudomonadati</taxon>
        <taxon>Pseudomonadota</taxon>
        <taxon>Gammaproteobacteria</taxon>
        <taxon>Alteromonadales</taxon>
        <taxon>Psychromonadaceae</taxon>
        <taxon>Psychromonas</taxon>
    </lineage>
</organism>
<evidence type="ECO:0000255" key="1">
    <source>
        <dbReference type="HAMAP-Rule" id="MF_01866"/>
    </source>
</evidence>
<evidence type="ECO:0000256" key="2">
    <source>
        <dbReference type="SAM" id="MobiDB-lite"/>
    </source>
</evidence>
<protein>
    <recommendedName>
        <fullName evidence="1">YcgL domain-containing protein Ping_1076</fullName>
    </recommendedName>
</protein>
<accession>A1STV0</accession>
<reference key="1">
    <citation type="journal article" date="2008" name="BMC Genomics">
        <title>Genomics of an extreme psychrophile, Psychromonas ingrahamii.</title>
        <authorList>
            <person name="Riley M."/>
            <person name="Staley J.T."/>
            <person name="Danchin A."/>
            <person name="Wang T.Z."/>
            <person name="Brettin T.S."/>
            <person name="Hauser L.J."/>
            <person name="Land M.L."/>
            <person name="Thompson L.S."/>
        </authorList>
    </citation>
    <scope>NUCLEOTIDE SEQUENCE [LARGE SCALE GENOMIC DNA]</scope>
    <source>
        <strain>DSM 17664 / CCUG 51855 / 37</strain>
    </source>
</reference>
<dbReference type="EMBL" id="CP000510">
    <property type="protein sequence ID" value="ABM02915.1"/>
    <property type="molecule type" value="Genomic_DNA"/>
</dbReference>
<dbReference type="RefSeq" id="WP_011769478.1">
    <property type="nucleotide sequence ID" value="NC_008709.1"/>
</dbReference>
<dbReference type="SMR" id="A1STV0"/>
<dbReference type="STRING" id="357804.Ping_1076"/>
<dbReference type="KEGG" id="pin:Ping_1076"/>
<dbReference type="eggNOG" id="COG3100">
    <property type="taxonomic scope" value="Bacteria"/>
</dbReference>
<dbReference type="HOGENOM" id="CLU_155118_1_0_6"/>
<dbReference type="OrthoDB" id="7062382at2"/>
<dbReference type="Proteomes" id="UP000000639">
    <property type="component" value="Chromosome"/>
</dbReference>
<dbReference type="Gene3D" id="3.10.510.20">
    <property type="entry name" value="YcgL domain"/>
    <property type="match status" value="1"/>
</dbReference>
<dbReference type="HAMAP" id="MF_01866">
    <property type="entry name" value="UPF0745"/>
    <property type="match status" value="1"/>
</dbReference>
<dbReference type="InterPro" id="IPR038068">
    <property type="entry name" value="YcgL-like_sf"/>
</dbReference>
<dbReference type="InterPro" id="IPR027354">
    <property type="entry name" value="YcgL_dom"/>
</dbReference>
<dbReference type="PANTHER" id="PTHR38109">
    <property type="entry name" value="PROTEIN YCGL"/>
    <property type="match status" value="1"/>
</dbReference>
<dbReference type="PANTHER" id="PTHR38109:SF1">
    <property type="entry name" value="PROTEIN YCGL"/>
    <property type="match status" value="1"/>
</dbReference>
<dbReference type="Pfam" id="PF05166">
    <property type="entry name" value="YcgL"/>
    <property type="match status" value="1"/>
</dbReference>
<dbReference type="SUPFAM" id="SSF160191">
    <property type="entry name" value="YcgL-like"/>
    <property type="match status" value="1"/>
</dbReference>
<dbReference type="PROSITE" id="PS51648">
    <property type="entry name" value="YCGL"/>
    <property type="match status" value="1"/>
</dbReference>
<feature type="chain" id="PRO_0000375346" description="YcgL domain-containing protein Ping_1076">
    <location>
        <begin position="1"/>
        <end position="98"/>
    </location>
</feature>
<feature type="domain" description="YcgL" evidence="1">
    <location>
        <begin position="1"/>
        <end position="85"/>
    </location>
</feature>
<feature type="region of interest" description="Disordered" evidence="2">
    <location>
        <begin position="75"/>
        <end position="98"/>
    </location>
</feature>
<keyword id="KW-1185">Reference proteome</keyword>
<proteinExistence type="inferred from homology"/>
<name>Y1076_PSYIN</name>